<feature type="chain" id="PRO_1000120482" description="UPF0149 protein YgfB">
    <location>
        <begin position="1"/>
        <end position="192"/>
    </location>
</feature>
<evidence type="ECO:0000255" key="1">
    <source>
        <dbReference type="HAMAP-Rule" id="MF_00346"/>
    </source>
</evidence>
<sequence>MSIQNEMPGYNEMNRFLNQQGAGLTPAEMHGLISGMICGGNNDSSWQPLLHDLTNEGLAFGHELAQALRKMHAATSDALEDDGFLFQLYLPEGDDVSVFDRADALAGWVNHFLLGLGVTQPKLDKVTGETGEAIDDLRNIAQLGYDESEDQEELEMSLEEIIEYVRVAALLCHDTFTRQQPTAPEVRKPTLH</sequence>
<organism>
    <name type="scientific">Salmonella heidelberg (strain SL476)</name>
    <dbReference type="NCBI Taxonomy" id="454169"/>
    <lineage>
        <taxon>Bacteria</taxon>
        <taxon>Pseudomonadati</taxon>
        <taxon>Pseudomonadota</taxon>
        <taxon>Gammaproteobacteria</taxon>
        <taxon>Enterobacterales</taxon>
        <taxon>Enterobacteriaceae</taxon>
        <taxon>Salmonella</taxon>
    </lineage>
</organism>
<dbReference type="EMBL" id="CP001120">
    <property type="protein sequence ID" value="ACF67631.1"/>
    <property type="molecule type" value="Genomic_DNA"/>
</dbReference>
<dbReference type="SMR" id="B4THE2"/>
<dbReference type="KEGG" id="seh:SeHA_C3292"/>
<dbReference type="HOGENOM" id="CLU_085336_1_0_6"/>
<dbReference type="Proteomes" id="UP000001866">
    <property type="component" value="Chromosome"/>
</dbReference>
<dbReference type="GO" id="GO:0005829">
    <property type="term" value="C:cytosol"/>
    <property type="evidence" value="ECO:0007669"/>
    <property type="project" value="TreeGrafter"/>
</dbReference>
<dbReference type="FunFam" id="1.20.120.740:FF:000001">
    <property type="entry name" value="UPF0149 protein YgfB"/>
    <property type="match status" value="1"/>
</dbReference>
<dbReference type="Gene3D" id="1.20.120.740">
    <property type="entry name" value="YgfB uncharacterised protein family UPF0149, PF03695"/>
    <property type="match status" value="1"/>
</dbReference>
<dbReference type="HAMAP" id="MF_00346">
    <property type="entry name" value="UPF0149"/>
    <property type="match status" value="1"/>
</dbReference>
<dbReference type="InterPro" id="IPR011978">
    <property type="entry name" value="YgfB-like"/>
</dbReference>
<dbReference type="InterPro" id="IPR036255">
    <property type="entry name" value="YgfB-like_sf"/>
</dbReference>
<dbReference type="NCBIfam" id="NF002477">
    <property type="entry name" value="PRK01736.1"/>
    <property type="match status" value="1"/>
</dbReference>
<dbReference type="NCBIfam" id="TIGR02292">
    <property type="entry name" value="ygfB_yecA"/>
    <property type="match status" value="1"/>
</dbReference>
<dbReference type="PANTHER" id="PTHR37528">
    <property type="entry name" value="UPF0149 PROTEIN YGFB"/>
    <property type="match status" value="1"/>
</dbReference>
<dbReference type="PANTHER" id="PTHR37528:SF1">
    <property type="entry name" value="UPF0149 PROTEIN YGFB"/>
    <property type="match status" value="1"/>
</dbReference>
<dbReference type="Pfam" id="PF03695">
    <property type="entry name" value="UPF0149"/>
    <property type="match status" value="1"/>
</dbReference>
<dbReference type="SUPFAM" id="SSF101327">
    <property type="entry name" value="YgfB-like"/>
    <property type="match status" value="1"/>
</dbReference>
<comment type="similarity">
    <text evidence="1">Belongs to the UPF0149 family.</text>
</comment>
<name>YGFB_SALHS</name>
<gene>
    <name evidence="1" type="primary">ygfB</name>
    <name type="ordered locus">SeHA_C3292</name>
</gene>
<protein>
    <recommendedName>
        <fullName evidence="1">UPF0149 protein YgfB</fullName>
    </recommendedName>
</protein>
<accession>B4THE2</accession>
<reference key="1">
    <citation type="journal article" date="2011" name="J. Bacteriol.">
        <title>Comparative genomics of 28 Salmonella enterica isolates: evidence for CRISPR-mediated adaptive sublineage evolution.</title>
        <authorList>
            <person name="Fricke W.F."/>
            <person name="Mammel M.K."/>
            <person name="McDermott P.F."/>
            <person name="Tartera C."/>
            <person name="White D.G."/>
            <person name="Leclerc J.E."/>
            <person name="Ravel J."/>
            <person name="Cebula T.A."/>
        </authorList>
    </citation>
    <scope>NUCLEOTIDE SEQUENCE [LARGE SCALE GENOMIC DNA]</scope>
    <source>
        <strain>SL476</strain>
    </source>
</reference>
<proteinExistence type="inferred from homology"/>